<reference key="1">
    <citation type="journal article" date="2004" name="Nature">
        <title>Genome evolution in yeasts.</title>
        <authorList>
            <person name="Dujon B."/>
            <person name="Sherman D."/>
            <person name="Fischer G."/>
            <person name="Durrens P."/>
            <person name="Casaregola S."/>
            <person name="Lafontaine I."/>
            <person name="de Montigny J."/>
            <person name="Marck C."/>
            <person name="Neuveglise C."/>
            <person name="Talla E."/>
            <person name="Goffard N."/>
            <person name="Frangeul L."/>
            <person name="Aigle M."/>
            <person name="Anthouard V."/>
            <person name="Babour A."/>
            <person name="Barbe V."/>
            <person name="Barnay S."/>
            <person name="Blanchin S."/>
            <person name="Beckerich J.-M."/>
            <person name="Beyne E."/>
            <person name="Bleykasten C."/>
            <person name="Boisrame A."/>
            <person name="Boyer J."/>
            <person name="Cattolico L."/>
            <person name="Confanioleri F."/>
            <person name="de Daruvar A."/>
            <person name="Despons L."/>
            <person name="Fabre E."/>
            <person name="Fairhead C."/>
            <person name="Ferry-Dumazet H."/>
            <person name="Groppi A."/>
            <person name="Hantraye F."/>
            <person name="Hennequin C."/>
            <person name="Jauniaux N."/>
            <person name="Joyet P."/>
            <person name="Kachouri R."/>
            <person name="Kerrest A."/>
            <person name="Koszul R."/>
            <person name="Lemaire M."/>
            <person name="Lesur I."/>
            <person name="Ma L."/>
            <person name="Muller H."/>
            <person name="Nicaud J.-M."/>
            <person name="Nikolski M."/>
            <person name="Oztas S."/>
            <person name="Ozier-Kalogeropoulos O."/>
            <person name="Pellenz S."/>
            <person name="Potier S."/>
            <person name="Richard G.-F."/>
            <person name="Straub M.-L."/>
            <person name="Suleau A."/>
            <person name="Swennen D."/>
            <person name="Tekaia F."/>
            <person name="Wesolowski-Louvel M."/>
            <person name="Westhof E."/>
            <person name="Wirth B."/>
            <person name="Zeniou-Meyer M."/>
            <person name="Zivanovic Y."/>
            <person name="Bolotin-Fukuhara M."/>
            <person name="Thierry A."/>
            <person name="Bouchier C."/>
            <person name="Caudron B."/>
            <person name="Scarpelli C."/>
            <person name="Gaillardin C."/>
            <person name="Weissenbach J."/>
            <person name="Wincker P."/>
            <person name="Souciet J.-L."/>
        </authorList>
    </citation>
    <scope>NUCLEOTIDE SEQUENCE [LARGE SCALE GENOMIC DNA]</scope>
    <source>
        <strain>ATCC 36239 / CBS 767 / BCRC 21394 / JCM 1990 / NBRC 0083 / IGC 2968</strain>
    </source>
</reference>
<dbReference type="EC" id="1.3.3.6"/>
<dbReference type="EMBL" id="CR382136">
    <property type="protein sequence ID" value="CAG87407.2"/>
    <property type="molecule type" value="Genomic_DNA"/>
</dbReference>
<dbReference type="RefSeq" id="XP_459235.2">
    <property type="nucleotide sequence ID" value="XM_459235.1"/>
</dbReference>
<dbReference type="SMR" id="Q6BRD5"/>
<dbReference type="FunCoup" id="Q6BRD5">
    <property type="interactions" value="452"/>
</dbReference>
<dbReference type="STRING" id="284592.Q6BRD5"/>
<dbReference type="GeneID" id="2901799"/>
<dbReference type="KEGG" id="dha:DEHA2D17248g"/>
<dbReference type="VEuPathDB" id="FungiDB:DEHA2D17248g"/>
<dbReference type="eggNOG" id="KOG0136">
    <property type="taxonomic scope" value="Eukaryota"/>
</dbReference>
<dbReference type="HOGENOM" id="CLU_014629_3_1_1"/>
<dbReference type="InParanoid" id="Q6BRD5"/>
<dbReference type="OMA" id="SINKRFA"/>
<dbReference type="OrthoDB" id="538336at2759"/>
<dbReference type="UniPathway" id="UPA00661"/>
<dbReference type="Proteomes" id="UP000000599">
    <property type="component" value="Chromosome D"/>
</dbReference>
<dbReference type="GO" id="GO:0005777">
    <property type="term" value="C:peroxisome"/>
    <property type="evidence" value="ECO:0007669"/>
    <property type="project" value="UniProtKB-SubCell"/>
</dbReference>
<dbReference type="GO" id="GO:0003997">
    <property type="term" value="F:acyl-CoA oxidase activity"/>
    <property type="evidence" value="ECO:0007669"/>
    <property type="project" value="UniProtKB-EC"/>
</dbReference>
<dbReference type="GO" id="GO:0071949">
    <property type="term" value="F:FAD binding"/>
    <property type="evidence" value="ECO:0007669"/>
    <property type="project" value="InterPro"/>
</dbReference>
<dbReference type="GO" id="GO:0005504">
    <property type="term" value="F:fatty acid binding"/>
    <property type="evidence" value="ECO:0007669"/>
    <property type="project" value="TreeGrafter"/>
</dbReference>
<dbReference type="GO" id="GO:0033540">
    <property type="term" value="P:fatty acid beta-oxidation using acyl-CoA oxidase"/>
    <property type="evidence" value="ECO:0007669"/>
    <property type="project" value="UniProtKB-UniPathway"/>
</dbReference>
<dbReference type="GO" id="GO:0055088">
    <property type="term" value="P:lipid homeostasis"/>
    <property type="evidence" value="ECO:0007669"/>
    <property type="project" value="TreeGrafter"/>
</dbReference>
<dbReference type="FunFam" id="1.10.540.10:FF:000018">
    <property type="entry name" value="Acyl-coenzyme A oxidase"/>
    <property type="match status" value="1"/>
</dbReference>
<dbReference type="FunFam" id="1.20.140.10:FF:000015">
    <property type="entry name" value="Acyl-coenzyme A oxidase"/>
    <property type="match status" value="1"/>
</dbReference>
<dbReference type="FunFam" id="2.40.110.10:FF:000003">
    <property type="entry name" value="Acyl-coenzyme A oxidase"/>
    <property type="match status" value="1"/>
</dbReference>
<dbReference type="Gene3D" id="1.10.540.10">
    <property type="entry name" value="Acyl-CoA dehydrogenase/oxidase, N-terminal domain"/>
    <property type="match status" value="1"/>
</dbReference>
<dbReference type="Gene3D" id="2.40.110.10">
    <property type="entry name" value="Butyryl-CoA Dehydrogenase, subunit A, domain 2"/>
    <property type="match status" value="1"/>
</dbReference>
<dbReference type="Gene3D" id="1.20.140.10">
    <property type="entry name" value="Butyryl-CoA Dehydrogenase, subunit A, domain 3"/>
    <property type="match status" value="2"/>
</dbReference>
<dbReference type="InterPro" id="IPR055060">
    <property type="entry name" value="ACOX_C_alpha1"/>
</dbReference>
<dbReference type="InterPro" id="IPR029320">
    <property type="entry name" value="Acyl-CoA_ox_N"/>
</dbReference>
<dbReference type="InterPro" id="IPR006091">
    <property type="entry name" value="Acyl-CoA_Oxase/DH_mid-dom"/>
</dbReference>
<dbReference type="InterPro" id="IPR046373">
    <property type="entry name" value="Acyl-CoA_Oxase/DH_mid-dom_sf"/>
</dbReference>
<dbReference type="InterPro" id="IPR012258">
    <property type="entry name" value="Acyl-CoA_oxidase"/>
</dbReference>
<dbReference type="InterPro" id="IPR002655">
    <property type="entry name" value="Acyl-CoA_oxidase_C"/>
</dbReference>
<dbReference type="InterPro" id="IPR036250">
    <property type="entry name" value="AcylCo_DH-like_C"/>
</dbReference>
<dbReference type="InterPro" id="IPR037069">
    <property type="entry name" value="AcylCoA_DH/ox_N_sf"/>
</dbReference>
<dbReference type="InterPro" id="IPR009100">
    <property type="entry name" value="AcylCoA_DH/oxidase_NM_dom_sf"/>
</dbReference>
<dbReference type="PANTHER" id="PTHR10909:SF352">
    <property type="entry name" value="ACYL-COENZYME A OXIDASE-LIKE PROTEIN"/>
    <property type="match status" value="1"/>
</dbReference>
<dbReference type="PANTHER" id="PTHR10909">
    <property type="entry name" value="ELECTRON TRANSPORT OXIDOREDUCTASE"/>
    <property type="match status" value="1"/>
</dbReference>
<dbReference type="Pfam" id="PF01756">
    <property type="entry name" value="ACOX"/>
    <property type="match status" value="1"/>
</dbReference>
<dbReference type="Pfam" id="PF22924">
    <property type="entry name" value="ACOX_C_alpha1"/>
    <property type="match status" value="1"/>
</dbReference>
<dbReference type="Pfam" id="PF02770">
    <property type="entry name" value="Acyl-CoA_dh_M"/>
    <property type="match status" value="1"/>
</dbReference>
<dbReference type="Pfam" id="PF14749">
    <property type="entry name" value="Acyl-CoA_ox_N"/>
    <property type="match status" value="1"/>
</dbReference>
<dbReference type="PIRSF" id="PIRSF000168">
    <property type="entry name" value="Acyl-CoA_oxidase"/>
    <property type="match status" value="1"/>
</dbReference>
<dbReference type="SUPFAM" id="SSF47203">
    <property type="entry name" value="Acyl-CoA dehydrogenase C-terminal domain-like"/>
    <property type="match status" value="2"/>
</dbReference>
<dbReference type="SUPFAM" id="SSF56645">
    <property type="entry name" value="Acyl-CoA dehydrogenase NM domain-like"/>
    <property type="match status" value="1"/>
</dbReference>
<comment type="catalytic activity">
    <reaction>
        <text>a 2,3-saturated acyl-CoA + O2 = a (2E)-enoyl-CoA + H2O2</text>
        <dbReference type="Rhea" id="RHEA:38959"/>
        <dbReference type="ChEBI" id="CHEBI:15379"/>
        <dbReference type="ChEBI" id="CHEBI:16240"/>
        <dbReference type="ChEBI" id="CHEBI:58856"/>
        <dbReference type="ChEBI" id="CHEBI:65111"/>
        <dbReference type="EC" id="1.3.3.6"/>
    </reaction>
</comment>
<comment type="cofactor">
    <cofactor evidence="1">
        <name>FAD</name>
        <dbReference type="ChEBI" id="CHEBI:57692"/>
    </cofactor>
</comment>
<comment type="pathway">
    <text>Lipid metabolism; peroxisomal fatty acid beta-oxidation.</text>
</comment>
<comment type="subcellular location">
    <subcellularLocation>
        <location evidence="1">Peroxisome</location>
    </subcellularLocation>
</comment>
<comment type="similarity">
    <text evidence="3">Belongs to the acyl-CoA oxidase family.</text>
</comment>
<sequence>MVSATNTVNSGVPPNPAASIQAERAASKFDPKEMHYFLEGGEERAEKFKQMMQQMERDPILSANFQYYDLTKDQQRELTALRIDRLTRYIENESFDDFNKRMSLMGVFDPQLSTRLGINLGLFVSCLKGNGTAEQVKYWAMDKSAVYMRGIYGCFGMTELAHGSNVAGLETTATFDDENDEFIINTPHIGATKWWIGGAAHSATHCSVYARLIVGGQDYGVKTFVVPLRDSNHDTMPGVTVGDIGAKMGRDGIDNGWIQFSNVRIPRYFMLQKFCKVSSEGDVQLPPLEQLSYSALLGGRVMMVLDSFRVSARFSTVALRYAIGRRQFKAGSASDDKNALECQLLDYPLHQRRLLPYLALSYIISASAVKIETTIESTLENLDKAVEADDMGAIMKSIDSMKSLFVDSGSLKSTCTWLAAEVIDQCRQACGGHGYSAYSGFGKAYNDWVVMCTWEGDNNVLAMSVGKQIIKHILGVLDGKKVKGSADFLNNTEQYLNEEPVLRSVDDLKDLKKVLLAIEVAIIRVAYQASQTLKENKGDFDTVGAEMVTLSKLNAHHFMLSEFLDRMDSFESKQLVPYLESVAKLYSATIVLEKFAGDFLAQGVFPPKLNGELNSKHIPELCKEIRPNVIALTDSFQQSDMMINSAIGSYDGNIYENYFGVVKANNPPSKTKAPYSGALEAMLNRPSKEERERFEKSTETAKILSK</sequence>
<accession>Q6BRD5</accession>
<feature type="chain" id="PRO_0000204698" description="Acyl-coenzyme A oxidase">
    <location>
        <begin position="1"/>
        <end position="706"/>
    </location>
</feature>
<feature type="region of interest" description="Disordered" evidence="2">
    <location>
        <begin position="682"/>
        <end position="706"/>
    </location>
</feature>
<feature type="compositionally biased region" description="Basic and acidic residues" evidence="2">
    <location>
        <begin position="686"/>
        <end position="699"/>
    </location>
</feature>
<organism>
    <name type="scientific">Debaryomyces hansenii (strain ATCC 36239 / CBS 767 / BCRC 21394 / JCM 1990 / NBRC 0083 / IGC 2968)</name>
    <name type="common">Yeast</name>
    <name type="synonym">Torulaspora hansenii</name>
    <dbReference type="NCBI Taxonomy" id="284592"/>
    <lineage>
        <taxon>Eukaryota</taxon>
        <taxon>Fungi</taxon>
        <taxon>Dikarya</taxon>
        <taxon>Ascomycota</taxon>
        <taxon>Saccharomycotina</taxon>
        <taxon>Pichiomycetes</taxon>
        <taxon>Debaryomycetaceae</taxon>
        <taxon>Debaryomyces</taxon>
    </lineage>
</organism>
<protein>
    <recommendedName>
        <fullName>Acyl-coenzyme A oxidase</fullName>
        <shortName>Acyl-CoA oxidase</shortName>
        <ecNumber>1.3.3.6</ecNumber>
    </recommendedName>
</protein>
<gene>
    <name type="primary">POX1</name>
    <name type="ordered locus">DEHA2D17248g</name>
</gene>
<proteinExistence type="inferred from homology"/>
<keyword id="KW-0274">FAD</keyword>
<keyword id="KW-0276">Fatty acid metabolism</keyword>
<keyword id="KW-0285">Flavoprotein</keyword>
<keyword id="KW-0443">Lipid metabolism</keyword>
<keyword id="KW-0560">Oxidoreductase</keyword>
<keyword id="KW-0576">Peroxisome</keyword>
<keyword id="KW-1185">Reference proteome</keyword>
<name>ACOX_DEBHA</name>
<evidence type="ECO:0000250" key="1"/>
<evidence type="ECO:0000256" key="2">
    <source>
        <dbReference type="SAM" id="MobiDB-lite"/>
    </source>
</evidence>
<evidence type="ECO:0000305" key="3"/>